<proteinExistence type="inferred from homology"/>
<accession>Q8F7W8</accession>
<sequence length="131" mass="14717">MNYEVNKSDEDWKKELTPEQYRILRQKGTEMAFTGALYKNQDKGTYVCAACGAVLFSSDTKYESGSGWPSFYQPVKDGVVDKQKDSSHGMERTEILCSKCGGHLGHVFNDGPRPTGLRYCINSASLKFQKE</sequence>
<feature type="chain" id="PRO_0000140279" description="Peptide methionine sulfoxide reductase MsrB">
    <location>
        <begin position="1"/>
        <end position="131"/>
    </location>
</feature>
<feature type="domain" description="MsrB" evidence="2">
    <location>
        <begin position="9"/>
        <end position="131"/>
    </location>
</feature>
<feature type="active site" description="Nucleophile" evidence="2">
    <location>
        <position position="120"/>
    </location>
</feature>
<feature type="binding site" evidence="2">
    <location>
        <position position="48"/>
    </location>
    <ligand>
        <name>Zn(2+)</name>
        <dbReference type="ChEBI" id="CHEBI:29105"/>
    </ligand>
</feature>
<feature type="binding site" evidence="2">
    <location>
        <position position="51"/>
    </location>
    <ligand>
        <name>Zn(2+)</name>
        <dbReference type="ChEBI" id="CHEBI:29105"/>
    </ligand>
</feature>
<feature type="binding site" evidence="2">
    <location>
        <position position="97"/>
    </location>
    <ligand>
        <name>Zn(2+)</name>
        <dbReference type="ChEBI" id="CHEBI:29105"/>
    </ligand>
</feature>
<feature type="binding site" evidence="2">
    <location>
        <position position="100"/>
    </location>
    <ligand>
        <name>Zn(2+)</name>
        <dbReference type="ChEBI" id="CHEBI:29105"/>
    </ligand>
</feature>
<comment type="catalytic activity">
    <reaction evidence="1">
        <text>L-methionyl-[protein] + [thioredoxin]-disulfide + H2O = L-methionyl-(R)-S-oxide-[protein] + [thioredoxin]-dithiol</text>
        <dbReference type="Rhea" id="RHEA:24164"/>
        <dbReference type="Rhea" id="RHEA-COMP:10698"/>
        <dbReference type="Rhea" id="RHEA-COMP:10700"/>
        <dbReference type="Rhea" id="RHEA-COMP:12313"/>
        <dbReference type="Rhea" id="RHEA-COMP:12314"/>
        <dbReference type="ChEBI" id="CHEBI:15377"/>
        <dbReference type="ChEBI" id="CHEBI:16044"/>
        <dbReference type="ChEBI" id="CHEBI:29950"/>
        <dbReference type="ChEBI" id="CHEBI:45764"/>
        <dbReference type="ChEBI" id="CHEBI:50058"/>
        <dbReference type="EC" id="1.8.4.12"/>
    </reaction>
</comment>
<comment type="cofactor">
    <cofactor evidence="1">
        <name>Zn(2+)</name>
        <dbReference type="ChEBI" id="CHEBI:29105"/>
    </cofactor>
    <text evidence="1">Binds 1 zinc ion per subunit. The zinc ion is important for the structural integrity of the protein.</text>
</comment>
<comment type="similarity">
    <text evidence="1">Belongs to the MsrB Met sulfoxide reductase family.</text>
</comment>
<gene>
    <name evidence="1" type="primary">msrB</name>
    <name type="ordered locus">LA_0824</name>
</gene>
<dbReference type="EC" id="1.8.4.12" evidence="1"/>
<dbReference type="EMBL" id="AE010300">
    <property type="protein sequence ID" value="AAN48023.2"/>
    <property type="molecule type" value="Genomic_DNA"/>
</dbReference>
<dbReference type="RefSeq" id="NP_711005.2">
    <property type="nucleotide sequence ID" value="NC_004342.2"/>
</dbReference>
<dbReference type="RefSeq" id="WP_002070109.1">
    <property type="nucleotide sequence ID" value="NC_004342.2"/>
</dbReference>
<dbReference type="SMR" id="Q8F7W8"/>
<dbReference type="FunCoup" id="Q8F7W8">
    <property type="interactions" value="421"/>
</dbReference>
<dbReference type="STRING" id="189518.LA_0824"/>
<dbReference type="PaxDb" id="189518-LA_0824"/>
<dbReference type="EnsemblBacteria" id="AAN48023">
    <property type="protein sequence ID" value="AAN48023"/>
    <property type="gene ID" value="LA_0824"/>
</dbReference>
<dbReference type="GeneID" id="61142674"/>
<dbReference type="KEGG" id="lil:LA_0824"/>
<dbReference type="PATRIC" id="fig|189518.3.peg.828"/>
<dbReference type="HOGENOM" id="CLU_031040_8_5_12"/>
<dbReference type="InParanoid" id="Q8F7W8"/>
<dbReference type="OrthoDB" id="4174719at2"/>
<dbReference type="Proteomes" id="UP000001408">
    <property type="component" value="Chromosome I"/>
</dbReference>
<dbReference type="GO" id="GO:0005737">
    <property type="term" value="C:cytoplasm"/>
    <property type="evidence" value="ECO:0000318"/>
    <property type="project" value="GO_Central"/>
</dbReference>
<dbReference type="GO" id="GO:0033743">
    <property type="term" value="F:peptide-methionine (R)-S-oxide reductase activity"/>
    <property type="evidence" value="ECO:0000318"/>
    <property type="project" value="GO_Central"/>
</dbReference>
<dbReference type="GO" id="GO:0008270">
    <property type="term" value="F:zinc ion binding"/>
    <property type="evidence" value="ECO:0007669"/>
    <property type="project" value="UniProtKB-UniRule"/>
</dbReference>
<dbReference type="GO" id="GO:0030091">
    <property type="term" value="P:protein repair"/>
    <property type="evidence" value="ECO:0007669"/>
    <property type="project" value="InterPro"/>
</dbReference>
<dbReference type="GO" id="GO:0006979">
    <property type="term" value="P:response to oxidative stress"/>
    <property type="evidence" value="ECO:0007669"/>
    <property type="project" value="InterPro"/>
</dbReference>
<dbReference type="FunFam" id="2.170.150.20:FF:000001">
    <property type="entry name" value="Peptide methionine sulfoxide reductase MsrB"/>
    <property type="match status" value="1"/>
</dbReference>
<dbReference type="Gene3D" id="2.170.150.20">
    <property type="entry name" value="Peptide methionine sulfoxide reductase"/>
    <property type="match status" value="1"/>
</dbReference>
<dbReference type="HAMAP" id="MF_01400">
    <property type="entry name" value="MsrB"/>
    <property type="match status" value="1"/>
</dbReference>
<dbReference type="InterPro" id="IPR028427">
    <property type="entry name" value="Met_Sox_Rdtase_MsrB"/>
</dbReference>
<dbReference type="InterPro" id="IPR002579">
    <property type="entry name" value="Met_Sox_Rdtase_MsrB_dom"/>
</dbReference>
<dbReference type="InterPro" id="IPR011057">
    <property type="entry name" value="Mss4-like_sf"/>
</dbReference>
<dbReference type="NCBIfam" id="TIGR00357">
    <property type="entry name" value="peptide-methionine (R)-S-oxide reductase MsrB"/>
    <property type="match status" value="1"/>
</dbReference>
<dbReference type="PANTHER" id="PTHR10173">
    <property type="entry name" value="METHIONINE SULFOXIDE REDUCTASE"/>
    <property type="match status" value="1"/>
</dbReference>
<dbReference type="PANTHER" id="PTHR10173:SF52">
    <property type="entry name" value="METHIONINE-R-SULFOXIDE REDUCTASE B1"/>
    <property type="match status" value="1"/>
</dbReference>
<dbReference type="Pfam" id="PF01641">
    <property type="entry name" value="SelR"/>
    <property type="match status" value="1"/>
</dbReference>
<dbReference type="SUPFAM" id="SSF51316">
    <property type="entry name" value="Mss4-like"/>
    <property type="match status" value="1"/>
</dbReference>
<dbReference type="PROSITE" id="PS51790">
    <property type="entry name" value="MSRB"/>
    <property type="match status" value="1"/>
</dbReference>
<keyword id="KW-0479">Metal-binding</keyword>
<keyword id="KW-0560">Oxidoreductase</keyword>
<keyword id="KW-1185">Reference proteome</keyword>
<keyword id="KW-0862">Zinc</keyword>
<protein>
    <recommendedName>
        <fullName evidence="1">Peptide methionine sulfoxide reductase MsrB</fullName>
        <ecNumber evidence="1">1.8.4.12</ecNumber>
    </recommendedName>
    <alternativeName>
        <fullName evidence="1">Peptide-methionine (R)-S-oxide reductase</fullName>
    </alternativeName>
</protein>
<evidence type="ECO:0000255" key="1">
    <source>
        <dbReference type="HAMAP-Rule" id="MF_01400"/>
    </source>
</evidence>
<evidence type="ECO:0000255" key="2">
    <source>
        <dbReference type="PROSITE-ProRule" id="PRU01126"/>
    </source>
</evidence>
<reference key="1">
    <citation type="journal article" date="2003" name="Nature">
        <title>Unique physiological and pathogenic features of Leptospira interrogans revealed by whole-genome sequencing.</title>
        <authorList>
            <person name="Ren S.-X."/>
            <person name="Fu G."/>
            <person name="Jiang X.-G."/>
            <person name="Zeng R."/>
            <person name="Miao Y.-G."/>
            <person name="Xu H."/>
            <person name="Zhang Y.-X."/>
            <person name="Xiong H."/>
            <person name="Lu G."/>
            <person name="Lu L.-F."/>
            <person name="Jiang H.-Q."/>
            <person name="Jia J."/>
            <person name="Tu Y.-F."/>
            <person name="Jiang J.-X."/>
            <person name="Gu W.-Y."/>
            <person name="Zhang Y.-Q."/>
            <person name="Cai Z."/>
            <person name="Sheng H.-H."/>
            <person name="Yin H.-F."/>
            <person name="Zhang Y."/>
            <person name="Zhu G.-F."/>
            <person name="Wan M."/>
            <person name="Huang H.-L."/>
            <person name="Qian Z."/>
            <person name="Wang S.-Y."/>
            <person name="Ma W."/>
            <person name="Yao Z.-J."/>
            <person name="Shen Y."/>
            <person name="Qiang B.-Q."/>
            <person name="Xia Q.-C."/>
            <person name="Guo X.-K."/>
            <person name="Danchin A."/>
            <person name="Saint Girons I."/>
            <person name="Somerville R.L."/>
            <person name="Wen Y.-M."/>
            <person name="Shi M.-H."/>
            <person name="Chen Z."/>
            <person name="Xu J.-G."/>
            <person name="Zhao G.-P."/>
        </authorList>
    </citation>
    <scope>NUCLEOTIDE SEQUENCE [LARGE SCALE GENOMIC DNA]</scope>
    <source>
        <strain>56601</strain>
    </source>
</reference>
<name>MSRB_LEPIN</name>
<organism>
    <name type="scientific">Leptospira interrogans serogroup Icterohaemorrhagiae serovar Lai (strain 56601)</name>
    <dbReference type="NCBI Taxonomy" id="189518"/>
    <lineage>
        <taxon>Bacteria</taxon>
        <taxon>Pseudomonadati</taxon>
        <taxon>Spirochaetota</taxon>
        <taxon>Spirochaetia</taxon>
        <taxon>Leptospirales</taxon>
        <taxon>Leptospiraceae</taxon>
        <taxon>Leptospira</taxon>
    </lineage>
</organism>